<feature type="signal peptide" evidence="1 2">
    <location>
        <begin position="1"/>
        <end position="23"/>
    </location>
</feature>
<feature type="chain" id="PRO_0000419111" description="Broad specificity amino-acid racemase" evidence="1">
    <location>
        <begin position="24"/>
        <end position="409"/>
    </location>
</feature>
<feature type="active site" description="Proton acceptor" evidence="1">
    <location>
        <position position="74"/>
    </location>
</feature>
<feature type="active site" description="Proton acceptor" evidence="1">
    <location>
        <position position="300"/>
    </location>
</feature>
<feature type="binding site" evidence="1">
    <location>
        <position position="173"/>
    </location>
    <ligand>
        <name>substrate</name>
    </ligand>
</feature>
<feature type="binding site" evidence="1">
    <location>
        <position position="348"/>
    </location>
    <ligand>
        <name>substrate</name>
    </ligand>
</feature>
<feature type="modified residue" description="N6-(pyridoxal phosphate)lysine" evidence="1">
    <location>
        <position position="74"/>
    </location>
</feature>
<feature type="disulfide bond" evidence="1 3">
    <location>
        <begin position="70"/>
        <end position="96"/>
    </location>
</feature>
<feature type="mutagenesis site" description="The catalytic efficiency with arginine, lysine, and ornithine is very similar to that of wild-type, and that with both L-alanine and D-alanine increases approximately five times; when associated with A-96." evidence="3">
    <original>C</original>
    <variation>A</variation>
    <location>
        <position position="70"/>
    </location>
</feature>
<feature type="mutagenesis site" description="The catalytic efficiency with arginine, lysine, and ornithine is very similar to that of wild-type, and that with both L-alanine and D-alanine increases approximately five times; when associated with A-70." evidence="3">
    <original>C</original>
    <variation>A</variation>
    <location>
        <position position="96"/>
    </location>
</feature>
<protein>
    <recommendedName>
        <fullName evidence="1 7">Broad specificity amino-acid racemase</fullName>
        <ecNumber evidence="1 2 3">5.1.1.10</ecNumber>
    </recommendedName>
    <alternativeName>
        <fullName evidence="5">Arginine racemase</fullName>
    </alternativeName>
    <alternativeName>
        <fullName evidence="4">Broad substrate specificity racemase</fullName>
    </alternativeName>
</protein>
<reference key="1">
    <citation type="journal article" date="2009" name="Appl. Microbiol. Biotechnol.">
        <title>A periplasmic, pyridoxal-5'-phosphate-dependent amino acid racemase in Pseudomonas taetrolens.</title>
        <authorList>
            <person name="Matsui D."/>
            <person name="Oikawa T."/>
            <person name="Arakawa N."/>
            <person name="Osumi S."/>
            <person name="Lausberg F."/>
            <person name="Stabler N."/>
            <person name="Freudl R."/>
            <person name="Eggeling L."/>
        </authorList>
    </citation>
    <scope>NUCLEOTIDE SEQUENCE [GENOMIC DNA]</scope>
    <scope>PROTEIN SEQUENCE OF 24-33</scope>
    <scope>FUNCTION</scope>
    <scope>CATALYTIC ACTIVITY</scope>
    <scope>COFACTOR</scope>
    <scope>SUBSTRATE SPECIFICITY</scope>
    <scope>BIOPHYSICOCHEMICAL PROPERTIES</scope>
    <scope>SUBUNIT</scope>
    <scope>SUBCELLULAR LOCATION</scope>
    <scope>DISRUPTION PHENOTYPE</scope>
    <source>
        <strain>ATCC 4683 / DSM 21104 / JCM 20238 / CCUG 560 / NBRC 3460 / NCIMB 9396 / NCTC 10697 / NRRL B-14</strain>
    </source>
</reference>
<reference key="2">
    <citation type="journal article" date="2010" name="Chem. Biodivers.">
        <title>Detection and function of the intramolecular disulfide bond in arginine racemase: an enzyme with broad substrate specificity.</title>
        <authorList>
            <person name="Matsui D."/>
            <person name="Oikawa T."/>
        </authorList>
    </citation>
    <scope>DISULFIDE BOND</scope>
    <scope>FUNCTION</scope>
    <scope>CATALYTIC ACTIVITY</scope>
    <scope>SUBSTRATE SPECIFICITY</scope>
    <scope>BIOPHYSICOCHEMICAL PROPERTIES</scope>
    <scope>MUTAGENESIS OF CYS-70 AND CYS-96</scope>
    <source>
        <strain>ATCC 4683 / DSM 21104 / JCM 20238 / CCUG 560 / NBRC 3460 / NCIMB 9396 / NCTC 10697 / NRRL B-14</strain>
    </source>
</reference>
<accession>I0J1I6</accession>
<sequence>MPFSRTLLALSLGMALLQNPAFAAPPLSMTDGVAQVNTQDSNAWVEINKAAFEHNIRTLQTALAGKSQICAVLKADAYGHGIGLLMPSVIAMGVPCVGVASNEEARVVRESGFKGQLIRVRTAALSELEAALPYNMEELVGNLDFAVKASLIAEDHGRPLVVHLGLNSSGMSRNGVDMTTAQGRRDAVAITKVPNLEVRAIMTHFAVEDAADVRAGLKAFNQQAQWLMNVAQLDRSKITLHAANSFATLEVPESHLDMVRPGGALFGDTVPSHTEYKRVMQFKSHVASVNSYPKGNTVGYGRTYTLGRDSRLANITVGYSDGYRRAFTNKGIVLINGHRVPVVGKVSMNTLMVDVTDAPDVKSGDEVVLFGHQGKAEITQAEIEDINGALLADLYTVWGNSNPKILKDQ</sequence>
<proteinExistence type="evidence at protein level"/>
<evidence type="ECO:0000255" key="1">
    <source>
        <dbReference type="HAMAP-Rule" id="MF_02212"/>
    </source>
</evidence>
<evidence type="ECO:0000269" key="2">
    <source>
    </source>
</evidence>
<evidence type="ECO:0000269" key="3">
    <source>
    </source>
</evidence>
<evidence type="ECO:0000303" key="4">
    <source>
    </source>
</evidence>
<evidence type="ECO:0000303" key="5">
    <source>
    </source>
</evidence>
<evidence type="ECO:0000305" key="6"/>
<evidence type="ECO:0000305" key="7">
    <source>
    </source>
</evidence>
<gene>
    <name evidence="4" type="primary">argR</name>
</gene>
<name>BSR_PSETA</name>
<comment type="function">
    <text evidence="2">Amino-acid racemase able to utilize a broad range of substrates. Is mostly active with lysine and arginine and, to a lesser extent, with ornithine, whereas is about 10 times less active with alanine, methionine and ethionine. With phenylalanine as substrate only a trace activity is detectable, and is inactive with glutamate. Plays a key role in the catabolism of D-arginine and D-lysine, that allows P.taetrolens strain NBRC 3460 to grow on these basic D-amino acids as a sole carbon source.</text>
</comment>
<comment type="catalytic activity">
    <reaction evidence="1 2 3">
        <text>an L-alpha-amino acid = a D-alpha-amino acid</text>
        <dbReference type="Rhea" id="RHEA:18317"/>
        <dbReference type="ChEBI" id="CHEBI:59869"/>
        <dbReference type="ChEBI" id="CHEBI:59871"/>
        <dbReference type="EC" id="5.1.1.10"/>
    </reaction>
</comment>
<comment type="catalytic activity">
    <reaction evidence="1 2 3">
        <text>L-lysine = D-lysine</text>
        <dbReference type="Rhea" id="RHEA:22864"/>
        <dbReference type="ChEBI" id="CHEBI:32551"/>
        <dbReference type="ChEBI" id="CHEBI:32557"/>
    </reaction>
    <physiologicalReaction direction="right-to-left" evidence="2">
        <dbReference type="Rhea" id="RHEA:22866"/>
    </physiologicalReaction>
</comment>
<comment type="catalytic activity">
    <reaction evidence="1 2 3">
        <text>L-arginine = D-arginine</text>
        <dbReference type="Rhea" id="RHEA:18069"/>
        <dbReference type="ChEBI" id="CHEBI:32682"/>
        <dbReference type="ChEBI" id="CHEBI:32689"/>
    </reaction>
    <physiologicalReaction direction="right-to-left" evidence="2">
        <dbReference type="Rhea" id="RHEA:18071"/>
    </physiologicalReaction>
</comment>
<comment type="catalytic activity">
    <reaction evidence="2 3">
        <text>L-ornithine = D-ornithine</text>
        <dbReference type="Rhea" id="RHEA:11584"/>
        <dbReference type="ChEBI" id="CHEBI:46911"/>
        <dbReference type="ChEBI" id="CHEBI:57668"/>
    </reaction>
</comment>
<comment type="catalytic activity">
    <reaction evidence="2 3">
        <text>L-alanine = D-alanine</text>
        <dbReference type="Rhea" id="RHEA:20249"/>
        <dbReference type="ChEBI" id="CHEBI:57416"/>
        <dbReference type="ChEBI" id="CHEBI:57972"/>
    </reaction>
</comment>
<comment type="catalytic activity">
    <reaction evidence="2">
        <text>L-methionine = D-methionine</text>
        <dbReference type="Rhea" id="RHEA:12492"/>
        <dbReference type="ChEBI" id="CHEBI:57844"/>
        <dbReference type="ChEBI" id="CHEBI:57932"/>
    </reaction>
</comment>
<comment type="cofactor">
    <cofactor evidence="1 2">
        <name>pyridoxal 5'-phosphate</name>
        <dbReference type="ChEBI" id="CHEBI:597326"/>
    </cofactor>
</comment>
<comment type="biophysicochemical properties">
    <kinetics>
        <KM evidence="3">2.4 mM for L-lysine</KM>
        <KM evidence="3">2.4 mM for D-lysine</KM>
        <KM evidence="3">1.2 mM for L-arginine</KM>
        <KM evidence="3">1.2 mM for D-arginine</KM>
        <KM evidence="3">3.7 mM for L-ornithine</KM>
        <KM evidence="3">3.6 mM for D-ornithine</KM>
        <KM evidence="3">15.7 mM for L-alanine</KM>
        <KM evidence="3">15 mM for D-alanine</KM>
        <text evidence="3">kcat is 109.0 sec(-1) with L-lysine as substrate. kcat is 104.0 sec(-1) with D-lysine as substrate. kcat is 119.0 sec(-1) with L-arginine as substrate. kcat is 119.0 sec(-1) with D-arginine as substrate. kcat is 87.7 sec(-1) with L-ornithine as substrate. kcat is 87.3 sec(-1) with D-ornithine as substrate. kcat is 2.4 sec(-1) with L-alanine as substrate. kcat is 2.6 sec(-1) with D-alanine as substrate.</text>
    </kinetics>
    <phDependence>
        <text evidence="2">Optimum pH is 8.0.</text>
    </phDependence>
    <temperatureDependence>
        <text evidence="2">Optimum temperature is 65 degrees Celsius.</text>
    </temperatureDependence>
</comment>
<comment type="subunit">
    <text evidence="2">Homodimer.</text>
</comment>
<comment type="subcellular location">
    <subcellularLocation>
        <location evidence="1 2">Periplasm</location>
    </subcellularLocation>
    <text evidence="2">Is translocated into the periplasm via a Tat-independent protein translocation pathway and, therefore, must have been translocated via the Sec route.</text>
</comment>
<comment type="disruption phenotype">
    <text evidence="2">Cells lacking this gene are no longer able to utilize D-Lys as a sole carbon source for growth, and also the utilization of D-Arg is strongly reduced. The growth of the deletion mutant strain on LB medium is slightly retarded as compared to the wild type, which might indicate that ArgR is also generally involved in amino acid degradation.</text>
</comment>
<comment type="similarity">
    <text evidence="1 6">Belongs to the alanine racemase family. Bsr subfamily.</text>
</comment>
<keyword id="KW-0903">Direct protein sequencing</keyword>
<keyword id="KW-1015">Disulfide bond</keyword>
<keyword id="KW-0413">Isomerase</keyword>
<keyword id="KW-0574">Periplasm</keyword>
<keyword id="KW-0663">Pyridoxal phosphate</keyword>
<keyword id="KW-0732">Signal</keyword>
<organism>
    <name type="scientific">Pseudomonas taetrolens</name>
    <dbReference type="NCBI Taxonomy" id="47884"/>
    <lineage>
        <taxon>Bacteria</taxon>
        <taxon>Pseudomonadati</taxon>
        <taxon>Pseudomonadota</taxon>
        <taxon>Gammaproteobacteria</taxon>
        <taxon>Pseudomonadales</taxon>
        <taxon>Pseudomonadaceae</taxon>
        <taxon>Pseudomonas</taxon>
    </lineage>
</organism>
<dbReference type="EC" id="5.1.1.10" evidence="1 2 3"/>
<dbReference type="EMBL" id="AB096176">
    <property type="protein sequence ID" value="BAM13386.1"/>
    <property type="molecule type" value="Genomic_DNA"/>
</dbReference>
<dbReference type="SMR" id="I0J1I6"/>
<dbReference type="STRING" id="47884.SAMN04490203_2786"/>
<dbReference type="BRENDA" id="5.1.1.10">
    <property type="organism ID" value="5196"/>
</dbReference>
<dbReference type="GO" id="GO:0005829">
    <property type="term" value="C:cytosol"/>
    <property type="evidence" value="ECO:0007669"/>
    <property type="project" value="TreeGrafter"/>
</dbReference>
<dbReference type="GO" id="GO:0042597">
    <property type="term" value="C:periplasmic space"/>
    <property type="evidence" value="ECO:0007669"/>
    <property type="project" value="UniProtKB-SubCell"/>
</dbReference>
<dbReference type="GO" id="GO:0008784">
    <property type="term" value="F:alanine racemase activity"/>
    <property type="evidence" value="ECO:0007669"/>
    <property type="project" value="InterPro"/>
</dbReference>
<dbReference type="GO" id="GO:0047679">
    <property type="term" value="F:arginine racemase activity"/>
    <property type="evidence" value="ECO:0007669"/>
    <property type="project" value="RHEA"/>
</dbReference>
<dbReference type="GO" id="GO:0018113">
    <property type="term" value="F:lysine racemase activity"/>
    <property type="evidence" value="ECO:0007669"/>
    <property type="project" value="RHEA"/>
</dbReference>
<dbReference type="GO" id="GO:0018111">
    <property type="term" value="F:methionine racemase activity"/>
    <property type="evidence" value="ECO:0007669"/>
    <property type="project" value="RHEA"/>
</dbReference>
<dbReference type="GO" id="GO:0050157">
    <property type="term" value="F:ornithine racemase activity"/>
    <property type="evidence" value="ECO:0007669"/>
    <property type="project" value="RHEA"/>
</dbReference>
<dbReference type="GO" id="GO:0030170">
    <property type="term" value="F:pyridoxal phosphate binding"/>
    <property type="evidence" value="ECO:0007669"/>
    <property type="project" value="UniProtKB-UniRule"/>
</dbReference>
<dbReference type="CDD" id="cd06826">
    <property type="entry name" value="PLPDE_III_AR2"/>
    <property type="match status" value="1"/>
</dbReference>
<dbReference type="Gene3D" id="3.20.20.10">
    <property type="entry name" value="Alanine racemase"/>
    <property type="match status" value="1"/>
</dbReference>
<dbReference type="Gene3D" id="2.40.37.10">
    <property type="entry name" value="Lyase, Ornithine Decarboxylase, Chain A, domain 1"/>
    <property type="match status" value="1"/>
</dbReference>
<dbReference type="HAMAP" id="MF_02212">
    <property type="entry name" value="Bsr_racemase"/>
    <property type="match status" value="1"/>
</dbReference>
<dbReference type="InterPro" id="IPR000821">
    <property type="entry name" value="Ala_racemase"/>
</dbReference>
<dbReference type="InterPro" id="IPR009006">
    <property type="entry name" value="Ala_racemase/Decarboxylase_C"/>
</dbReference>
<dbReference type="InterPro" id="IPR011079">
    <property type="entry name" value="Ala_racemase_C"/>
</dbReference>
<dbReference type="InterPro" id="IPR001608">
    <property type="entry name" value="Ala_racemase_N"/>
</dbReference>
<dbReference type="InterPro" id="IPR020622">
    <property type="entry name" value="Ala_racemase_pyridoxalP-BS"/>
</dbReference>
<dbReference type="InterPro" id="IPR029066">
    <property type="entry name" value="PLP-binding_barrel"/>
</dbReference>
<dbReference type="InterPro" id="IPR043698">
    <property type="entry name" value="Racemase_Bsr/Lyr"/>
</dbReference>
<dbReference type="NCBIfam" id="TIGR00492">
    <property type="entry name" value="alr"/>
    <property type="match status" value="1"/>
</dbReference>
<dbReference type="NCBIfam" id="NF009879">
    <property type="entry name" value="PRK13340.1-4"/>
    <property type="match status" value="1"/>
</dbReference>
<dbReference type="PANTHER" id="PTHR30511">
    <property type="entry name" value="ALANINE RACEMASE"/>
    <property type="match status" value="1"/>
</dbReference>
<dbReference type="PANTHER" id="PTHR30511:SF0">
    <property type="entry name" value="ALANINE RACEMASE, CATABOLIC-RELATED"/>
    <property type="match status" value="1"/>
</dbReference>
<dbReference type="Pfam" id="PF00842">
    <property type="entry name" value="Ala_racemase_C"/>
    <property type="match status" value="1"/>
</dbReference>
<dbReference type="Pfam" id="PF01168">
    <property type="entry name" value="Ala_racemase_N"/>
    <property type="match status" value="1"/>
</dbReference>
<dbReference type="PRINTS" id="PR00992">
    <property type="entry name" value="ALARACEMASE"/>
</dbReference>
<dbReference type="SMART" id="SM01005">
    <property type="entry name" value="Ala_racemase_C"/>
    <property type="match status" value="1"/>
</dbReference>
<dbReference type="SUPFAM" id="SSF50621">
    <property type="entry name" value="Alanine racemase C-terminal domain-like"/>
    <property type="match status" value="1"/>
</dbReference>
<dbReference type="SUPFAM" id="SSF51419">
    <property type="entry name" value="PLP-binding barrel"/>
    <property type="match status" value="1"/>
</dbReference>
<dbReference type="PROSITE" id="PS00395">
    <property type="entry name" value="ALANINE_RACEMASE"/>
    <property type="match status" value="1"/>
</dbReference>